<organism>
    <name type="scientific">Ehrlichia canis (strain Jake)</name>
    <dbReference type="NCBI Taxonomy" id="269484"/>
    <lineage>
        <taxon>Bacteria</taxon>
        <taxon>Pseudomonadati</taxon>
        <taxon>Pseudomonadota</taxon>
        <taxon>Alphaproteobacteria</taxon>
        <taxon>Rickettsiales</taxon>
        <taxon>Anaplasmataceae</taxon>
        <taxon>Ehrlichia</taxon>
    </lineage>
</organism>
<protein>
    <recommendedName>
        <fullName evidence="1">Large ribosomal subunit protein bL33</fullName>
    </recommendedName>
    <alternativeName>
        <fullName evidence="2">50S ribosomal protein L33</fullName>
    </alternativeName>
</protein>
<name>RL33_EHRCJ</name>
<evidence type="ECO:0000255" key="1">
    <source>
        <dbReference type="HAMAP-Rule" id="MF_00294"/>
    </source>
</evidence>
<evidence type="ECO:0000305" key="2"/>
<dbReference type="EMBL" id="CP000107">
    <property type="protein sequence ID" value="AAZ68271.1"/>
    <property type="status" value="ALT_INIT"/>
    <property type="molecule type" value="Genomic_DNA"/>
</dbReference>
<dbReference type="RefSeq" id="WP_011304349.1">
    <property type="nucleotide sequence ID" value="NC_007354.1"/>
</dbReference>
<dbReference type="SMR" id="Q3YSN4"/>
<dbReference type="FunCoup" id="Q3YSN4">
    <property type="interactions" value="295"/>
</dbReference>
<dbReference type="STRING" id="269484.Ecaj_0222"/>
<dbReference type="KEGG" id="ecn:Ecaj_0222"/>
<dbReference type="eggNOG" id="COG0267">
    <property type="taxonomic scope" value="Bacteria"/>
</dbReference>
<dbReference type="HOGENOM" id="CLU_190949_1_0_5"/>
<dbReference type="InParanoid" id="Q3YSN4"/>
<dbReference type="Proteomes" id="UP000000435">
    <property type="component" value="Chromosome"/>
</dbReference>
<dbReference type="GO" id="GO:0005737">
    <property type="term" value="C:cytoplasm"/>
    <property type="evidence" value="ECO:0007669"/>
    <property type="project" value="UniProtKB-ARBA"/>
</dbReference>
<dbReference type="GO" id="GO:0015934">
    <property type="term" value="C:large ribosomal subunit"/>
    <property type="evidence" value="ECO:0007669"/>
    <property type="project" value="TreeGrafter"/>
</dbReference>
<dbReference type="GO" id="GO:0003735">
    <property type="term" value="F:structural constituent of ribosome"/>
    <property type="evidence" value="ECO:0007669"/>
    <property type="project" value="InterPro"/>
</dbReference>
<dbReference type="GO" id="GO:0006412">
    <property type="term" value="P:translation"/>
    <property type="evidence" value="ECO:0007669"/>
    <property type="project" value="UniProtKB-UniRule"/>
</dbReference>
<dbReference type="Gene3D" id="2.20.28.120">
    <property type="entry name" value="Ribosomal protein L33"/>
    <property type="match status" value="1"/>
</dbReference>
<dbReference type="HAMAP" id="MF_00294">
    <property type="entry name" value="Ribosomal_bL33"/>
    <property type="match status" value="1"/>
</dbReference>
<dbReference type="InterPro" id="IPR001705">
    <property type="entry name" value="Ribosomal_bL33"/>
</dbReference>
<dbReference type="InterPro" id="IPR038584">
    <property type="entry name" value="Ribosomal_bL33_sf"/>
</dbReference>
<dbReference type="InterPro" id="IPR011332">
    <property type="entry name" value="Ribosomal_zn-bd"/>
</dbReference>
<dbReference type="NCBIfam" id="NF001860">
    <property type="entry name" value="PRK00595.1"/>
    <property type="match status" value="1"/>
</dbReference>
<dbReference type="NCBIfam" id="TIGR01023">
    <property type="entry name" value="rpmG_bact"/>
    <property type="match status" value="1"/>
</dbReference>
<dbReference type="PANTHER" id="PTHR15238">
    <property type="entry name" value="54S RIBOSOMAL PROTEIN L39, MITOCHONDRIAL"/>
    <property type="match status" value="1"/>
</dbReference>
<dbReference type="PANTHER" id="PTHR15238:SF1">
    <property type="entry name" value="LARGE RIBOSOMAL SUBUNIT PROTEIN BL33M"/>
    <property type="match status" value="1"/>
</dbReference>
<dbReference type="Pfam" id="PF00471">
    <property type="entry name" value="Ribosomal_L33"/>
    <property type="match status" value="1"/>
</dbReference>
<dbReference type="SUPFAM" id="SSF57829">
    <property type="entry name" value="Zn-binding ribosomal proteins"/>
    <property type="match status" value="1"/>
</dbReference>
<keyword id="KW-0687">Ribonucleoprotein</keyword>
<keyword id="KW-0689">Ribosomal protein</keyword>
<gene>
    <name evidence="1" type="primary">rpmG</name>
    <name type="ordered locus">Ecaj_0222</name>
</gene>
<feature type="chain" id="PRO_0000356453" description="Large ribosomal subunit protein bL33">
    <location>
        <begin position="1"/>
        <end position="56"/>
    </location>
</feature>
<accession>Q3YSN4</accession>
<sequence length="56" mass="6498">MAKKGSTLLVKLASSAKTGFFYVKKRNPKKLINKLSFRKYDPVVRKHVLFSEEKLK</sequence>
<reference key="1">
    <citation type="journal article" date="2006" name="J. Bacteriol.">
        <title>The genome of the obligately intracellular bacterium Ehrlichia canis reveals themes of complex membrane structure and immune evasion strategies.</title>
        <authorList>
            <person name="Mavromatis K."/>
            <person name="Doyle C.K."/>
            <person name="Lykidis A."/>
            <person name="Ivanova N."/>
            <person name="Francino M.P."/>
            <person name="Chain P."/>
            <person name="Shin M."/>
            <person name="Malfatti S."/>
            <person name="Larimer F."/>
            <person name="Copeland A."/>
            <person name="Detter J.C."/>
            <person name="Land M."/>
            <person name="Richardson P.M."/>
            <person name="Yu X.J."/>
            <person name="Walker D.H."/>
            <person name="McBride J.W."/>
            <person name="Kyrpides N.C."/>
        </authorList>
    </citation>
    <scope>NUCLEOTIDE SEQUENCE [LARGE SCALE GENOMIC DNA]</scope>
    <source>
        <strain>Jake</strain>
    </source>
</reference>
<proteinExistence type="inferred from homology"/>
<comment type="similarity">
    <text evidence="1">Belongs to the bacterial ribosomal protein bL33 family.</text>
</comment>
<comment type="sequence caution" evidence="2">
    <conflict type="erroneous initiation">
        <sequence resource="EMBL-CDS" id="AAZ68271"/>
    </conflict>
</comment>